<proteinExistence type="inferred from homology"/>
<gene>
    <name evidence="1" type="primary">rpsQ</name>
    <name type="ordered locus">RER_18610</name>
</gene>
<protein>
    <recommendedName>
        <fullName evidence="1">Small ribosomal subunit protein uS17</fullName>
    </recommendedName>
    <alternativeName>
        <fullName evidence="2">30S ribosomal protein S17</fullName>
    </alternativeName>
</protein>
<comment type="function">
    <text evidence="1">One of the primary rRNA binding proteins, it binds specifically to the 5'-end of 16S ribosomal RNA.</text>
</comment>
<comment type="subunit">
    <text evidence="1">Part of the 30S ribosomal subunit.</text>
</comment>
<comment type="similarity">
    <text evidence="1">Belongs to the universal ribosomal protein uS17 family.</text>
</comment>
<organism>
    <name type="scientific">Rhodococcus erythropolis (strain PR4 / NBRC 100887)</name>
    <dbReference type="NCBI Taxonomy" id="234621"/>
    <lineage>
        <taxon>Bacteria</taxon>
        <taxon>Bacillati</taxon>
        <taxon>Actinomycetota</taxon>
        <taxon>Actinomycetes</taxon>
        <taxon>Mycobacteriales</taxon>
        <taxon>Nocardiaceae</taxon>
        <taxon>Rhodococcus</taxon>
        <taxon>Rhodococcus erythropolis group</taxon>
    </lineage>
</organism>
<dbReference type="EMBL" id="AP008957">
    <property type="protein sequence ID" value="BAH32569.1"/>
    <property type="molecule type" value="Genomic_DNA"/>
</dbReference>
<dbReference type="RefSeq" id="WP_003941020.1">
    <property type="nucleotide sequence ID" value="NC_012490.1"/>
</dbReference>
<dbReference type="SMR" id="C0ZW34"/>
<dbReference type="GeneID" id="93803295"/>
<dbReference type="KEGG" id="rer:RER_18610"/>
<dbReference type="eggNOG" id="COG0186">
    <property type="taxonomic scope" value="Bacteria"/>
</dbReference>
<dbReference type="HOGENOM" id="CLU_073626_1_0_11"/>
<dbReference type="Proteomes" id="UP000002204">
    <property type="component" value="Chromosome"/>
</dbReference>
<dbReference type="GO" id="GO:0022627">
    <property type="term" value="C:cytosolic small ribosomal subunit"/>
    <property type="evidence" value="ECO:0007669"/>
    <property type="project" value="TreeGrafter"/>
</dbReference>
<dbReference type="GO" id="GO:0019843">
    <property type="term" value="F:rRNA binding"/>
    <property type="evidence" value="ECO:0007669"/>
    <property type="project" value="UniProtKB-UniRule"/>
</dbReference>
<dbReference type="GO" id="GO:0003735">
    <property type="term" value="F:structural constituent of ribosome"/>
    <property type="evidence" value="ECO:0007669"/>
    <property type="project" value="InterPro"/>
</dbReference>
<dbReference type="GO" id="GO:0006412">
    <property type="term" value="P:translation"/>
    <property type="evidence" value="ECO:0007669"/>
    <property type="project" value="UniProtKB-UniRule"/>
</dbReference>
<dbReference type="CDD" id="cd00364">
    <property type="entry name" value="Ribosomal_uS17"/>
    <property type="match status" value="1"/>
</dbReference>
<dbReference type="FunFam" id="2.40.50.140:FF:000026">
    <property type="entry name" value="30S ribosomal protein S17"/>
    <property type="match status" value="1"/>
</dbReference>
<dbReference type="Gene3D" id="2.40.50.140">
    <property type="entry name" value="Nucleic acid-binding proteins"/>
    <property type="match status" value="1"/>
</dbReference>
<dbReference type="HAMAP" id="MF_01345_B">
    <property type="entry name" value="Ribosomal_uS17_B"/>
    <property type="match status" value="1"/>
</dbReference>
<dbReference type="InterPro" id="IPR012340">
    <property type="entry name" value="NA-bd_OB-fold"/>
</dbReference>
<dbReference type="InterPro" id="IPR000266">
    <property type="entry name" value="Ribosomal_uS17"/>
</dbReference>
<dbReference type="InterPro" id="IPR019984">
    <property type="entry name" value="Ribosomal_uS17_bact/chlr"/>
</dbReference>
<dbReference type="InterPro" id="IPR019979">
    <property type="entry name" value="Ribosomal_uS17_CS"/>
</dbReference>
<dbReference type="NCBIfam" id="NF004123">
    <property type="entry name" value="PRK05610.1"/>
    <property type="match status" value="1"/>
</dbReference>
<dbReference type="NCBIfam" id="TIGR03635">
    <property type="entry name" value="uS17_bact"/>
    <property type="match status" value="1"/>
</dbReference>
<dbReference type="PANTHER" id="PTHR10744">
    <property type="entry name" value="40S RIBOSOMAL PROTEIN S11 FAMILY MEMBER"/>
    <property type="match status" value="1"/>
</dbReference>
<dbReference type="PANTHER" id="PTHR10744:SF1">
    <property type="entry name" value="SMALL RIBOSOMAL SUBUNIT PROTEIN US17M"/>
    <property type="match status" value="1"/>
</dbReference>
<dbReference type="Pfam" id="PF00366">
    <property type="entry name" value="Ribosomal_S17"/>
    <property type="match status" value="1"/>
</dbReference>
<dbReference type="PRINTS" id="PR00973">
    <property type="entry name" value="RIBOSOMALS17"/>
</dbReference>
<dbReference type="SUPFAM" id="SSF50249">
    <property type="entry name" value="Nucleic acid-binding proteins"/>
    <property type="match status" value="1"/>
</dbReference>
<dbReference type="PROSITE" id="PS00056">
    <property type="entry name" value="RIBOSOMAL_S17"/>
    <property type="match status" value="1"/>
</dbReference>
<name>RS17_RHOE4</name>
<evidence type="ECO:0000255" key="1">
    <source>
        <dbReference type="HAMAP-Rule" id="MF_01345"/>
    </source>
</evidence>
<evidence type="ECO:0000305" key="2"/>
<accession>C0ZW34</accession>
<sequence length="93" mass="10659">MSEEKAVSTEERASRKVRVGYVVSDKMEKTIVVELEDRVKHKLYGKIIRRTTKVKAHDENGVAGVGDRVQLMETRPLSATKHWRLVEVLEKAK</sequence>
<reference key="1">
    <citation type="submission" date="2005-03" db="EMBL/GenBank/DDBJ databases">
        <title>Comparison of the complete genome sequences of Rhodococcus erythropolis PR4 and Rhodococcus opacus B4.</title>
        <authorList>
            <person name="Takarada H."/>
            <person name="Sekine M."/>
            <person name="Hosoyama A."/>
            <person name="Yamada R."/>
            <person name="Fujisawa T."/>
            <person name="Omata S."/>
            <person name="Shimizu A."/>
            <person name="Tsukatani N."/>
            <person name="Tanikawa S."/>
            <person name="Fujita N."/>
            <person name="Harayama S."/>
        </authorList>
    </citation>
    <scope>NUCLEOTIDE SEQUENCE [LARGE SCALE GENOMIC DNA]</scope>
    <source>
        <strain>PR4 / NBRC 100887</strain>
    </source>
</reference>
<feature type="chain" id="PRO_1000214795" description="Small ribosomal subunit protein uS17">
    <location>
        <begin position="1"/>
        <end position="93"/>
    </location>
</feature>
<keyword id="KW-0687">Ribonucleoprotein</keyword>
<keyword id="KW-0689">Ribosomal protein</keyword>
<keyword id="KW-0694">RNA-binding</keyword>
<keyword id="KW-0699">rRNA-binding</keyword>